<reference key="1">
    <citation type="submission" date="2004-11" db="EMBL/GenBank/DDBJ databases">
        <authorList>
            <consortium name="The German cDNA consortium"/>
        </authorList>
    </citation>
    <scope>NUCLEOTIDE SEQUENCE [LARGE SCALE MRNA] (ISOFORM 2)</scope>
    <source>
        <tissue>Brain cortex</tissue>
    </source>
</reference>
<reference key="2">
    <citation type="submission" date="2008-02" db="EMBL/GenBank/DDBJ databases">
        <title>A 6x draft sequence assembly of the Pongo pygmaeus abelii genome.</title>
        <authorList>
            <person name="Wilson R.K."/>
            <person name="Mardis E."/>
        </authorList>
    </citation>
    <scope>NUCLEOTIDE SEQUENCE [LARGE SCALE GENOMIC DNA]</scope>
</reference>
<organism>
    <name type="scientific">Pongo abelii</name>
    <name type="common">Sumatran orangutan</name>
    <name type="synonym">Pongo pygmaeus abelii</name>
    <dbReference type="NCBI Taxonomy" id="9601"/>
    <lineage>
        <taxon>Eukaryota</taxon>
        <taxon>Metazoa</taxon>
        <taxon>Chordata</taxon>
        <taxon>Craniata</taxon>
        <taxon>Vertebrata</taxon>
        <taxon>Euteleostomi</taxon>
        <taxon>Mammalia</taxon>
        <taxon>Eutheria</taxon>
        <taxon>Euarchontoglires</taxon>
        <taxon>Primates</taxon>
        <taxon>Haplorrhini</taxon>
        <taxon>Catarrhini</taxon>
        <taxon>Hominidae</taxon>
        <taxon>Pongo</taxon>
    </lineage>
</organism>
<comment type="function">
    <text evidence="1">Plays a role in short-term synaptic plasticity in a subset of GABAergic neurons in the brain.</text>
</comment>
<comment type="subcellular location">
    <subcellularLocation>
        <location evidence="1">Cytoplasmic vesicle membrane</location>
        <topology evidence="1">Single-pass type I membrane protein</topology>
    </subcellularLocation>
    <subcellularLocation>
        <location evidence="1">Cell membrane</location>
        <topology evidence="1">Single-pass type I membrane protein</topology>
    </subcellularLocation>
    <subcellularLocation>
        <location evidence="1">Cell projection</location>
        <location evidence="1">Dendrite</location>
    </subcellularLocation>
    <subcellularLocation>
        <location evidence="1">Cytoplasmic vesicle</location>
        <location evidence="1">Secretory vesicle</location>
        <location evidence="1">Synaptic vesicle membrane</location>
        <topology evidence="1">Single-pass type I membrane protein</topology>
    </subcellularLocation>
    <subcellularLocation>
        <location evidence="1">Cell projection</location>
        <location evidence="1">Growth cone membrane</location>
        <topology evidence="1">Single-pass type I membrane protein</topology>
    </subcellularLocation>
    <subcellularLocation>
        <location evidence="1">Early endosome membrane</location>
        <topology evidence="1">Single-pass type I membrane protein</topology>
    </subcellularLocation>
    <subcellularLocation>
        <location evidence="1">Recycling endosome</location>
    </subcellularLocation>
    <subcellularLocation>
        <location evidence="2">Endoplasmic reticulum-Golgi intermediate compartment membrane</location>
        <topology evidence="1">Single-pass type I membrane protein</topology>
    </subcellularLocation>
    <subcellularLocation>
        <location evidence="2">Endosome membrane</location>
        <topology evidence="1">Single-pass type I membrane protein</topology>
    </subcellularLocation>
    <text evidence="1 2">Recycles from the vesicles of the endocytic recycling compartment (ERC) to the plasma membrane (By similarity). Colocalizes with UNC93B1 in large endosomal intracellular vesicles (By similarity). Accumulates in the endoplasmic reticulum-Golgi intermediate compartment (ERGIC) before its disappearance upon activation by CpG dinucleotides (By similarity). Associates with cortical membranes (By similarity). Localizes mostly in cytoplasmic vesicles of neuronal cell body. Localizes to synaptic vesicles in a subset of GABAergic neurons (By similarity).</text>
</comment>
<comment type="alternative products">
    <event type="alternative splicing"/>
    <isoform>
        <id>Q5R5V2-1</id>
        <name>1</name>
        <sequence type="displayed"/>
    </isoform>
    <isoform>
        <id>Q5R5V2-2</id>
        <name>2</name>
        <sequence type="described" ref="VSP_059121"/>
    </isoform>
</comment>
<comment type="PTM">
    <text evidence="1">Glycosylated.</text>
</comment>
<comment type="similarity">
    <text evidence="5">Belongs to the LAMP family.</text>
</comment>
<gene>
    <name type="primary">LAMP5</name>
</gene>
<accession>Q5R5V2</accession>
<accession>H2P108</accession>
<dbReference type="EMBL" id="CR860751">
    <property type="protein sequence ID" value="CAH92864.1"/>
    <property type="molecule type" value="mRNA"/>
</dbReference>
<dbReference type="EMBL" id="ABGA01004038">
    <property type="status" value="NOT_ANNOTATED_CDS"/>
    <property type="molecule type" value="Genomic_DNA"/>
</dbReference>
<dbReference type="EMBL" id="ABGA01004039">
    <property type="status" value="NOT_ANNOTATED_CDS"/>
    <property type="molecule type" value="Genomic_DNA"/>
</dbReference>
<dbReference type="RefSeq" id="NP_001126676.1">
    <property type="nucleotide sequence ID" value="NM_001133204.1"/>
</dbReference>
<dbReference type="SMR" id="Q5R5V2"/>
<dbReference type="FunCoup" id="Q5R5V2">
    <property type="interactions" value="346"/>
</dbReference>
<dbReference type="STRING" id="9601.ENSPPYP00000011964"/>
<dbReference type="GlyCosmos" id="Q5R5V2">
    <property type="glycosylation" value="3 sites, No reported glycans"/>
</dbReference>
<dbReference type="GeneID" id="100173676"/>
<dbReference type="KEGG" id="pon:100173676"/>
<dbReference type="CTD" id="24141"/>
<dbReference type="eggNOG" id="KOG4818">
    <property type="taxonomic scope" value="Eukaryota"/>
</dbReference>
<dbReference type="InParanoid" id="Q5R5V2"/>
<dbReference type="OrthoDB" id="6248302at2759"/>
<dbReference type="TreeFam" id="TF330776"/>
<dbReference type="Proteomes" id="UP000001595">
    <property type="component" value="Chromosome 20"/>
</dbReference>
<dbReference type="GO" id="GO:0030659">
    <property type="term" value="C:cytoplasmic vesicle membrane"/>
    <property type="evidence" value="ECO:0000250"/>
    <property type="project" value="UniProtKB"/>
</dbReference>
<dbReference type="GO" id="GO:0032590">
    <property type="term" value="C:dendrite membrane"/>
    <property type="evidence" value="ECO:0000250"/>
    <property type="project" value="UniProtKB"/>
</dbReference>
<dbReference type="GO" id="GO:0031901">
    <property type="term" value="C:early endosome membrane"/>
    <property type="evidence" value="ECO:0000250"/>
    <property type="project" value="UniProtKB"/>
</dbReference>
<dbReference type="GO" id="GO:0033116">
    <property type="term" value="C:endoplasmic reticulum-Golgi intermediate compartment membrane"/>
    <property type="evidence" value="ECO:0000250"/>
    <property type="project" value="UniProtKB"/>
</dbReference>
<dbReference type="GO" id="GO:0010008">
    <property type="term" value="C:endosome membrane"/>
    <property type="evidence" value="ECO:0000250"/>
    <property type="project" value="UniProtKB"/>
</dbReference>
<dbReference type="GO" id="GO:0032584">
    <property type="term" value="C:growth cone membrane"/>
    <property type="evidence" value="ECO:0000250"/>
    <property type="project" value="UniProtKB"/>
</dbReference>
<dbReference type="GO" id="GO:0031902">
    <property type="term" value="C:late endosome membrane"/>
    <property type="evidence" value="ECO:0007669"/>
    <property type="project" value="TreeGrafter"/>
</dbReference>
<dbReference type="GO" id="GO:0005765">
    <property type="term" value="C:lysosomal membrane"/>
    <property type="evidence" value="ECO:0007669"/>
    <property type="project" value="TreeGrafter"/>
</dbReference>
<dbReference type="GO" id="GO:0005886">
    <property type="term" value="C:plasma membrane"/>
    <property type="evidence" value="ECO:0000250"/>
    <property type="project" value="UniProtKB"/>
</dbReference>
<dbReference type="GO" id="GO:0055038">
    <property type="term" value="C:recycling endosome membrane"/>
    <property type="evidence" value="ECO:0000250"/>
    <property type="project" value="UniProtKB"/>
</dbReference>
<dbReference type="GO" id="GO:0030672">
    <property type="term" value="C:synaptic vesicle membrane"/>
    <property type="evidence" value="ECO:0007669"/>
    <property type="project" value="UniProtKB-SubCell"/>
</dbReference>
<dbReference type="GO" id="GO:0072594">
    <property type="term" value="P:establishment of protein localization to organelle"/>
    <property type="evidence" value="ECO:0007669"/>
    <property type="project" value="TreeGrafter"/>
</dbReference>
<dbReference type="FunFam" id="2.40.160.110:FF:000002">
    <property type="entry name" value="lysosome-associated membrane glycoprotein 5 isoform X1"/>
    <property type="match status" value="1"/>
</dbReference>
<dbReference type="Gene3D" id="2.40.160.110">
    <property type="match status" value="1"/>
</dbReference>
<dbReference type="InterPro" id="IPR048528">
    <property type="entry name" value="Lamp2-like_luminal"/>
</dbReference>
<dbReference type="InterPro" id="IPR002000">
    <property type="entry name" value="Lysosome-assoc_membr_glycop"/>
</dbReference>
<dbReference type="PANTHER" id="PTHR11506">
    <property type="entry name" value="LYSOSOME-ASSOCIATED MEMBRANE GLYCOPROTEIN"/>
    <property type="match status" value="1"/>
</dbReference>
<dbReference type="PANTHER" id="PTHR11506:SF35">
    <property type="entry name" value="LYSOSOME-ASSOCIATED MEMBRANE GLYCOPROTEIN 5"/>
    <property type="match status" value="1"/>
</dbReference>
<dbReference type="Pfam" id="PF01299">
    <property type="entry name" value="Lamp2-like_luminal"/>
    <property type="match status" value="1"/>
</dbReference>
<dbReference type="PROSITE" id="PS00310">
    <property type="entry name" value="LAMP_1"/>
    <property type="match status" value="1"/>
</dbReference>
<name>LAMP5_PONAB</name>
<protein>
    <recommendedName>
        <fullName>Lysosome-associated membrane glycoprotein 5</fullName>
    </recommendedName>
    <alternativeName>
        <fullName>Brain and dendritic cell-associated LAMP</fullName>
    </alternativeName>
    <alternativeName>
        <fullName>Brain-associated LAMP-like protein</fullName>
        <shortName>BAD-LAMP</shortName>
    </alternativeName>
    <alternativeName>
        <fullName>Lysosome-associated membrane protein 5</fullName>
        <shortName>LAMP-5</shortName>
    </alternativeName>
</protein>
<sequence length="261" mass="29190">MDLQGRAVPSVDRLRVLLMLFHTMAQIMAEQEVENLSGLSTNPEKDIFVVRENGTTCLMAEFAAKFIVPYDVWASNYVDLITEQADIALTRGAEVGRCGHSESELQVFWVDRAYALKMLFVKESHNMSKGPEETWRLSKVQFVYDSSEKTHFKDAVSAGKHTANSHHLSALVTPAGKSYECQAQQTISLASSDPQKTVTMILSAVHIQPFDIISDFVFSEEHKCAVDEREQLEETLPLILGLILGLVIVVTLAIYHVHPQK</sequence>
<evidence type="ECO:0000250" key="1">
    <source>
        <dbReference type="UniProtKB" id="Q9D387"/>
    </source>
</evidence>
<evidence type="ECO:0000250" key="2">
    <source>
        <dbReference type="UniProtKB" id="Q9UJQ1"/>
    </source>
</evidence>
<evidence type="ECO:0000255" key="3"/>
<evidence type="ECO:0000255" key="4">
    <source>
        <dbReference type="PROSITE-ProRule" id="PRU00498"/>
    </source>
</evidence>
<evidence type="ECO:0000305" key="5"/>
<proteinExistence type="evidence at transcript level"/>
<keyword id="KW-0025">Alternative splicing</keyword>
<keyword id="KW-1003">Cell membrane</keyword>
<keyword id="KW-0966">Cell projection</keyword>
<keyword id="KW-0968">Cytoplasmic vesicle</keyword>
<keyword id="KW-0967">Endosome</keyword>
<keyword id="KW-0325">Glycoprotein</keyword>
<keyword id="KW-0472">Membrane</keyword>
<keyword id="KW-1185">Reference proteome</keyword>
<keyword id="KW-0732">Signal</keyword>
<keyword id="KW-0770">Synapse</keyword>
<keyword id="KW-0812">Transmembrane</keyword>
<keyword id="KW-1133">Transmembrane helix</keyword>
<feature type="signal peptide" evidence="3">
    <location>
        <begin position="1"/>
        <end position="29"/>
    </location>
</feature>
<feature type="chain" id="PRO_0000042643" description="Lysosome-associated membrane glycoprotein 5">
    <location>
        <begin position="30"/>
        <end position="261"/>
    </location>
</feature>
<feature type="topological domain" description="Extracellular" evidence="5">
    <location>
        <begin position="30"/>
        <end position="234"/>
    </location>
</feature>
<feature type="transmembrane region" description="Helical" evidence="3">
    <location>
        <begin position="235"/>
        <end position="255"/>
    </location>
</feature>
<feature type="topological domain" description="Cytoplasmic" evidence="5">
    <location>
        <begin position="256"/>
        <end position="261"/>
    </location>
</feature>
<feature type="glycosylation site" description="N-linked (GlcNAc...) asparagine" evidence="4">
    <location>
        <position position="35"/>
    </location>
</feature>
<feature type="glycosylation site" description="N-linked (GlcNAc...) asparagine" evidence="4">
    <location>
        <position position="53"/>
    </location>
</feature>
<feature type="glycosylation site" description="N-linked (GlcNAc...) asparagine" evidence="4">
    <location>
        <position position="126"/>
    </location>
</feature>
<feature type="splice variant" id="VSP_059121" description="In isoform 2.">
    <original>EHKCAVDEREQLEETLPLILGLILGLVIVVTLAIYHVHPQK</original>
    <variation>GN</variation>
    <location>
        <begin position="221"/>
        <end position="261"/>
    </location>
</feature>
<feature type="sequence conflict" description="In Ref. 2; ABGA01004038/ABGA01004039." evidence="5" ref="2">
    <original>V</original>
    <variation>VK</variation>
    <location>
        <position position="95"/>
    </location>
</feature>
<feature type="sequence conflict" description="In Ref. 2; ABGA01004038/ABGA01004039." evidence="5" ref="2">
    <original>T</original>
    <variation>I</variation>
    <location>
        <position position="197"/>
    </location>
</feature>